<protein>
    <recommendedName>
        <fullName evidence="1">Large ribosomal subunit protein uL30</fullName>
    </recommendedName>
    <alternativeName>
        <fullName evidence="2">50S ribosomal protein L30</fullName>
    </alternativeName>
</protein>
<dbReference type="EMBL" id="CP001407">
    <property type="protein sequence ID" value="ACO29301.1"/>
    <property type="molecule type" value="Genomic_DNA"/>
</dbReference>
<dbReference type="RefSeq" id="WP_001085234.1">
    <property type="nucleotide sequence ID" value="NZ_CP009318.1"/>
</dbReference>
<dbReference type="SMR" id="C1ET57"/>
<dbReference type="GeneID" id="93010925"/>
<dbReference type="KEGG" id="bcx:BCA_0157"/>
<dbReference type="PATRIC" id="fig|572264.18.peg.192"/>
<dbReference type="Proteomes" id="UP000002210">
    <property type="component" value="Chromosome"/>
</dbReference>
<dbReference type="GO" id="GO:0022625">
    <property type="term" value="C:cytosolic large ribosomal subunit"/>
    <property type="evidence" value="ECO:0007669"/>
    <property type="project" value="TreeGrafter"/>
</dbReference>
<dbReference type="GO" id="GO:0003735">
    <property type="term" value="F:structural constituent of ribosome"/>
    <property type="evidence" value="ECO:0007669"/>
    <property type="project" value="InterPro"/>
</dbReference>
<dbReference type="GO" id="GO:0006412">
    <property type="term" value="P:translation"/>
    <property type="evidence" value="ECO:0007669"/>
    <property type="project" value="UniProtKB-UniRule"/>
</dbReference>
<dbReference type="CDD" id="cd01658">
    <property type="entry name" value="Ribosomal_L30"/>
    <property type="match status" value="1"/>
</dbReference>
<dbReference type="FunFam" id="3.30.1390.20:FF:000001">
    <property type="entry name" value="50S ribosomal protein L30"/>
    <property type="match status" value="1"/>
</dbReference>
<dbReference type="Gene3D" id="3.30.1390.20">
    <property type="entry name" value="Ribosomal protein L30, ferredoxin-like fold domain"/>
    <property type="match status" value="1"/>
</dbReference>
<dbReference type="HAMAP" id="MF_01371_B">
    <property type="entry name" value="Ribosomal_uL30_B"/>
    <property type="match status" value="1"/>
</dbReference>
<dbReference type="InterPro" id="IPR036919">
    <property type="entry name" value="Ribo_uL30_ferredoxin-like_sf"/>
</dbReference>
<dbReference type="InterPro" id="IPR005996">
    <property type="entry name" value="Ribosomal_uL30_bac-type"/>
</dbReference>
<dbReference type="InterPro" id="IPR018038">
    <property type="entry name" value="Ribosomal_uL30_CS"/>
</dbReference>
<dbReference type="InterPro" id="IPR016082">
    <property type="entry name" value="Ribosomal_uL30_ferredoxin-like"/>
</dbReference>
<dbReference type="NCBIfam" id="TIGR01308">
    <property type="entry name" value="rpmD_bact"/>
    <property type="match status" value="1"/>
</dbReference>
<dbReference type="PANTHER" id="PTHR15892:SF2">
    <property type="entry name" value="LARGE RIBOSOMAL SUBUNIT PROTEIN UL30M"/>
    <property type="match status" value="1"/>
</dbReference>
<dbReference type="PANTHER" id="PTHR15892">
    <property type="entry name" value="MITOCHONDRIAL RIBOSOMAL PROTEIN L30"/>
    <property type="match status" value="1"/>
</dbReference>
<dbReference type="Pfam" id="PF00327">
    <property type="entry name" value="Ribosomal_L30"/>
    <property type="match status" value="1"/>
</dbReference>
<dbReference type="PIRSF" id="PIRSF002211">
    <property type="entry name" value="Ribosomal_L30_bac-type"/>
    <property type="match status" value="1"/>
</dbReference>
<dbReference type="SUPFAM" id="SSF55129">
    <property type="entry name" value="Ribosomal protein L30p/L7e"/>
    <property type="match status" value="1"/>
</dbReference>
<dbReference type="PROSITE" id="PS00634">
    <property type="entry name" value="RIBOSOMAL_L30"/>
    <property type="match status" value="1"/>
</dbReference>
<reference key="1">
    <citation type="submission" date="2009-02" db="EMBL/GenBank/DDBJ databases">
        <title>Genome sequence of Bacillus cereus 03BB102.</title>
        <authorList>
            <person name="Dodson R.J."/>
            <person name="Jackson P."/>
            <person name="Munk A.C."/>
            <person name="Brettin T."/>
            <person name="Bruce D."/>
            <person name="Detter C."/>
            <person name="Tapia R."/>
            <person name="Han C."/>
            <person name="Sutton G."/>
            <person name="Sims D."/>
        </authorList>
    </citation>
    <scope>NUCLEOTIDE SEQUENCE [LARGE SCALE GENOMIC DNA]</scope>
    <source>
        <strain>03BB102</strain>
    </source>
</reference>
<organism>
    <name type="scientific">Bacillus cereus (strain 03BB102)</name>
    <dbReference type="NCBI Taxonomy" id="572264"/>
    <lineage>
        <taxon>Bacteria</taxon>
        <taxon>Bacillati</taxon>
        <taxon>Bacillota</taxon>
        <taxon>Bacilli</taxon>
        <taxon>Bacillales</taxon>
        <taxon>Bacillaceae</taxon>
        <taxon>Bacillus</taxon>
        <taxon>Bacillus cereus group</taxon>
    </lineage>
</organism>
<accession>C1ET57</accession>
<sequence length="60" mass="6556">MAKKLEITLTRSVIGRPQDQRATVEALGLKKLNSTVVKEETPAILGMINKVSHLVTVKEA</sequence>
<proteinExistence type="inferred from homology"/>
<evidence type="ECO:0000255" key="1">
    <source>
        <dbReference type="HAMAP-Rule" id="MF_01371"/>
    </source>
</evidence>
<evidence type="ECO:0000305" key="2"/>
<name>RL30_BACC3</name>
<gene>
    <name evidence="1" type="primary">rpmD</name>
    <name type="ordered locus">BCA_0157</name>
</gene>
<comment type="subunit">
    <text evidence="1">Part of the 50S ribosomal subunit.</text>
</comment>
<comment type="similarity">
    <text evidence="1">Belongs to the universal ribosomal protein uL30 family.</text>
</comment>
<feature type="chain" id="PRO_1000184124" description="Large ribosomal subunit protein uL30">
    <location>
        <begin position="1"/>
        <end position="60"/>
    </location>
</feature>
<keyword id="KW-0687">Ribonucleoprotein</keyword>
<keyword id="KW-0689">Ribosomal protein</keyword>